<reference key="1">
    <citation type="journal article" date="2011" name="J. Bacteriol.">
        <title>Genome sequence of lineage III Listeria monocytogenes strain HCC23.</title>
        <authorList>
            <person name="Steele C.L."/>
            <person name="Donaldson J.R."/>
            <person name="Paul D."/>
            <person name="Banes M.M."/>
            <person name="Arick T."/>
            <person name="Bridges S.M."/>
            <person name="Lawrence M.L."/>
        </authorList>
    </citation>
    <scope>NUCLEOTIDE SEQUENCE [LARGE SCALE GENOMIC DNA]</scope>
    <source>
        <strain>HCC23</strain>
    </source>
</reference>
<organism>
    <name type="scientific">Listeria monocytogenes serotype 4a (strain HCC23)</name>
    <dbReference type="NCBI Taxonomy" id="552536"/>
    <lineage>
        <taxon>Bacteria</taxon>
        <taxon>Bacillati</taxon>
        <taxon>Bacillota</taxon>
        <taxon>Bacilli</taxon>
        <taxon>Bacillales</taxon>
        <taxon>Listeriaceae</taxon>
        <taxon>Listeria</taxon>
    </lineage>
</organism>
<feature type="chain" id="PRO_1000196717" description="S-adenosylmethionine synthase">
    <location>
        <begin position="1"/>
        <end position="399"/>
    </location>
</feature>
<feature type="region of interest" description="Flexible loop" evidence="1">
    <location>
        <begin position="101"/>
        <end position="111"/>
    </location>
</feature>
<feature type="binding site" description="in other chain" evidence="1">
    <location>
        <position position="17"/>
    </location>
    <ligand>
        <name>ATP</name>
        <dbReference type="ChEBI" id="CHEBI:30616"/>
        <note>ligand shared between two neighboring subunits</note>
    </ligand>
</feature>
<feature type="binding site" evidence="1">
    <location>
        <position position="19"/>
    </location>
    <ligand>
        <name>Mg(2+)</name>
        <dbReference type="ChEBI" id="CHEBI:18420"/>
    </ligand>
</feature>
<feature type="binding site" evidence="1">
    <location>
        <position position="45"/>
    </location>
    <ligand>
        <name>K(+)</name>
        <dbReference type="ChEBI" id="CHEBI:29103"/>
    </ligand>
</feature>
<feature type="binding site" description="in other chain" evidence="1">
    <location>
        <position position="58"/>
    </location>
    <ligand>
        <name>L-methionine</name>
        <dbReference type="ChEBI" id="CHEBI:57844"/>
        <note>ligand shared between two neighboring subunits</note>
    </ligand>
</feature>
<feature type="binding site" description="in other chain" evidence="1">
    <location>
        <position position="101"/>
    </location>
    <ligand>
        <name>L-methionine</name>
        <dbReference type="ChEBI" id="CHEBI:57844"/>
        <note>ligand shared between two neighboring subunits</note>
    </ligand>
</feature>
<feature type="binding site" description="in other chain" evidence="1">
    <location>
        <begin position="177"/>
        <end position="179"/>
    </location>
    <ligand>
        <name>ATP</name>
        <dbReference type="ChEBI" id="CHEBI:30616"/>
        <note>ligand shared between two neighboring subunits</note>
    </ligand>
</feature>
<feature type="binding site" description="in other chain" evidence="1">
    <location>
        <begin position="244"/>
        <end position="245"/>
    </location>
    <ligand>
        <name>ATP</name>
        <dbReference type="ChEBI" id="CHEBI:30616"/>
        <note>ligand shared between two neighboring subunits</note>
    </ligand>
</feature>
<feature type="binding site" evidence="1">
    <location>
        <position position="253"/>
    </location>
    <ligand>
        <name>ATP</name>
        <dbReference type="ChEBI" id="CHEBI:30616"/>
        <note>ligand shared between two neighboring subunits</note>
    </ligand>
</feature>
<feature type="binding site" evidence="1">
    <location>
        <position position="253"/>
    </location>
    <ligand>
        <name>L-methionine</name>
        <dbReference type="ChEBI" id="CHEBI:57844"/>
        <note>ligand shared between two neighboring subunits</note>
    </ligand>
</feature>
<feature type="binding site" description="in other chain" evidence="1">
    <location>
        <begin position="259"/>
        <end position="260"/>
    </location>
    <ligand>
        <name>ATP</name>
        <dbReference type="ChEBI" id="CHEBI:30616"/>
        <note>ligand shared between two neighboring subunits</note>
    </ligand>
</feature>
<feature type="binding site" evidence="1">
    <location>
        <position position="276"/>
    </location>
    <ligand>
        <name>ATP</name>
        <dbReference type="ChEBI" id="CHEBI:30616"/>
        <note>ligand shared between two neighboring subunits</note>
    </ligand>
</feature>
<feature type="binding site" evidence="1">
    <location>
        <position position="280"/>
    </location>
    <ligand>
        <name>ATP</name>
        <dbReference type="ChEBI" id="CHEBI:30616"/>
        <note>ligand shared between two neighboring subunits</note>
    </ligand>
</feature>
<feature type="binding site" description="in other chain" evidence="1">
    <location>
        <position position="284"/>
    </location>
    <ligand>
        <name>L-methionine</name>
        <dbReference type="ChEBI" id="CHEBI:57844"/>
        <note>ligand shared between two neighboring subunits</note>
    </ligand>
</feature>
<sequence>MAKNRHLFTSESVSDGHPDKIADQISDAILDAIISKDPDARVACETTVTTGLVLVAGEITTSVYVDIPKIVRDTIKEIGYTRAKYGFDAETCAVLTAIDEQSPDIAQGVDEALESRSGKEIDAAIEAIGAGDQGLMFGFATDETEELMPLPIFLAHGLARKLTELRKTNKLDYLRPDAKTQVTVEYDEFNQPVRIDTIVVSTQHHPDITQEQIAKDLHTYLFPEVIDASFLDEDTKYFINPTGRFVIGGPLGDAGLTGRKIIVDTYGGYARHGGGAFSGKDPTKVDRSGAYAARYVAKNIVAAGLAKKVEVQVAYAIGVARPVSISIDTYGTSDYSEQELIDGVNELFDLRPAGIIHMLDLRRPIYRQTAAFGHFGRSDLDLPWERTDKAEALKKLIVK</sequence>
<accession>B8DFQ7</accession>
<keyword id="KW-0067">ATP-binding</keyword>
<keyword id="KW-0963">Cytoplasm</keyword>
<keyword id="KW-0460">Magnesium</keyword>
<keyword id="KW-0479">Metal-binding</keyword>
<keyword id="KW-0547">Nucleotide-binding</keyword>
<keyword id="KW-0554">One-carbon metabolism</keyword>
<keyword id="KW-0630">Potassium</keyword>
<keyword id="KW-0808">Transferase</keyword>
<gene>
    <name evidence="1" type="primary">metK</name>
    <name type="ordered locus">LMHCC_0901</name>
</gene>
<dbReference type="EC" id="2.5.1.6" evidence="1"/>
<dbReference type="EMBL" id="CP001175">
    <property type="protein sequence ID" value="ACK39250.1"/>
    <property type="molecule type" value="Genomic_DNA"/>
</dbReference>
<dbReference type="RefSeq" id="WP_003727328.1">
    <property type="nucleotide sequence ID" value="NC_011660.1"/>
</dbReference>
<dbReference type="SMR" id="B8DFQ7"/>
<dbReference type="KEGG" id="lmh:LMHCC_0901"/>
<dbReference type="HOGENOM" id="CLU_041802_1_1_9"/>
<dbReference type="UniPathway" id="UPA00315">
    <property type="reaction ID" value="UER00080"/>
</dbReference>
<dbReference type="GO" id="GO:0005737">
    <property type="term" value="C:cytoplasm"/>
    <property type="evidence" value="ECO:0007669"/>
    <property type="project" value="UniProtKB-SubCell"/>
</dbReference>
<dbReference type="GO" id="GO:0005524">
    <property type="term" value="F:ATP binding"/>
    <property type="evidence" value="ECO:0007669"/>
    <property type="project" value="UniProtKB-UniRule"/>
</dbReference>
<dbReference type="GO" id="GO:0000287">
    <property type="term" value="F:magnesium ion binding"/>
    <property type="evidence" value="ECO:0007669"/>
    <property type="project" value="UniProtKB-UniRule"/>
</dbReference>
<dbReference type="GO" id="GO:0004478">
    <property type="term" value="F:methionine adenosyltransferase activity"/>
    <property type="evidence" value="ECO:0007669"/>
    <property type="project" value="UniProtKB-UniRule"/>
</dbReference>
<dbReference type="GO" id="GO:0006730">
    <property type="term" value="P:one-carbon metabolic process"/>
    <property type="evidence" value="ECO:0007669"/>
    <property type="project" value="UniProtKB-KW"/>
</dbReference>
<dbReference type="GO" id="GO:0006556">
    <property type="term" value="P:S-adenosylmethionine biosynthetic process"/>
    <property type="evidence" value="ECO:0007669"/>
    <property type="project" value="UniProtKB-UniRule"/>
</dbReference>
<dbReference type="CDD" id="cd18079">
    <property type="entry name" value="S-AdoMet_synt"/>
    <property type="match status" value="1"/>
</dbReference>
<dbReference type="FunFam" id="3.30.300.10:FF:000003">
    <property type="entry name" value="S-adenosylmethionine synthase"/>
    <property type="match status" value="1"/>
</dbReference>
<dbReference type="FunFam" id="3.30.300.10:FF:000004">
    <property type="entry name" value="S-adenosylmethionine synthase"/>
    <property type="match status" value="1"/>
</dbReference>
<dbReference type="Gene3D" id="3.30.300.10">
    <property type="match status" value="3"/>
</dbReference>
<dbReference type="HAMAP" id="MF_00086">
    <property type="entry name" value="S_AdoMet_synth1"/>
    <property type="match status" value="1"/>
</dbReference>
<dbReference type="InterPro" id="IPR022631">
    <property type="entry name" value="ADOMET_SYNTHASE_CS"/>
</dbReference>
<dbReference type="InterPro" id="IPR022630">
    <property type="entry name" value="S-AdoMet_synt_C"/>
</dbReference>
<dbReference type="InterPro" id="IPR022629">
    <property type="entry name" value="S-AdoMet_synt_central"/>
</dbReference>
<dbReference type="InterPro" id="IPR022628">
    <property type="entry name" value="S-AdoMet_synt_N"/>
</dbReference>
<dbReference type="InterPro" id="IPR002133">
    <property type="entry name" value="S-AdoMet_synthetase"/>
</dbReference>
<dbReference type="InterPro" id="IPR022636">
    <property type="entry name" value="S-AdoMet_synthetase_sfam"/>
</dbReference>
<dbReference type="NCBIfam" id="TIGR01034">
    <property type="entry name" value="metK"/>
    <property type="match status" value="1"/>
</dbReference>
<dbReference type="PANTHER" id="PTHR11964">
    <property type="entry name" value="S-ADENOSYLMETHIONINE SYNTHETASE"/>
    <property type="match status" value="1"/>
</dbReference>
<dbReference type="Pfam" id="PF02773">
    <property type="entry name" value="S-AdoMet_synt_C"/>
    <property type="match status" value="1"/>
</dbReference>
<dbReference type="Pfam" id="PF02772">
    <property type="entry name" value="S-AdoMet_synt_M"/>
    <property type="match status" value="1"/>
</dbReference>
<dbReference type="Pfam" id="PF00438">
    <property type="entry name" value="S-AdoMet_synt_N"/>
    <property type="match status" value="1"/>
</dbReference>
<dbReference type="PIRSF" id="PIRSF000497">
    <property type="entry name" value="MAT"/>
    <property type="match status" value="1"/>
</dbReference>
<dbReference type="SUPFAM" id="SSF55973">
    <property type="entry name" value="S-adenosylmethionine synthetase"/>
    <property type="match status" value="3"/>
</dbReference>
<dbReference type="PROSITE" id="PS00376">
    <property type="entry name" value="ADOMET_SYNTHASE_1"/>
    <property type="match status" value="1"/>
</dbReference>
<dbReference type="PROSITE" id="PS00377">
    <property type="entry name" value="ADOMET_SYNTHASE_2"/>
    <property type="match status" value="1"/>
</dbReference>
<comment type="function">
    <text evidence="1">Catalyzes the formation of S-adenosylmethionine (AdoMet) from methionine and ATP. The overall synthetic reaction is composed of two sequential steps, AdoMet formation and the subsequent tripolyphosphate hydrolysis which occurs prior to release of AdoMet from the enzyme.</text>
</comment>
<comment type="catalytic activity">
    <reaction evidence="1">
        <text>L-methionine + ATP + H2O = S-adenosyl-L-methionine + phosphate + diphosphate</text>
        <dbReference type="Rhea" id="RHEA:21080"/>
        <dbReference type="ChEBI" id="CHEBI:15377"/>
        <dbReference type="ChEBI" id="CHEBI:30616"/>
        <dbReference type="ChEBI" id="CHEBI:33019"/>
        <dbReference type="ChEBI" id="CHEBI:43474"/>
        <dbReference type="ChEBI" id="CHEBI:57844"/>
        <dbReference type="ChEBI" id="CHEBI:59789"/>
        <dbReference type="EC" id="2.5.1.6"/>
    </reaction>
</comment>
<comment type="cofactor">
    <cofactor evidence="1">
        <name>Mg(2+)</name>
        <dbReference type="ChEBI" id="CHEBI:18420"/>
    </cofactor>
    <text evidence="1">Binds 2 divalent ions per subunit.</text>
</comment>
<comment type="cofactor">
    <cofactor evidence="1">
        <name>K(+)</name>
        <dbReference type="ChEBI" id="CHEBI:29103"/>
    </cofactor>
    <text evidence="1">Binds 1 potassium ion per subunit.</text>
</comment>
<comment type="pathway">
    <text evidence="1">Amino-acid biosynthesis; S-adenosyl-L-methionine biosynthesis; S-adenosyl-L-methionine from L-methionine: step 1/1.</text>
</comment>
<comment type="subunit">
    <text evidence="1">Homotetramer; dimer of dimers.</text>
</comment>
<comment type="subcellular location">
    <subcellularLocation>
        <location evidence="1">Cytoplasm</location>
    </subcellularLocation>
</comment>
<comment type="similarity">
    <text evidence="1">Belongs to the AdoMet synthase family.</text>
</comment>
<proteinExistence type="inferred from homology"/>
<protein>
    <recommendedName>
        <fullName evidence="1">S-adenosylmethionine synthase</fullName>
        <shortName evidence="1">AdoMet synthase</shortName>
        <ecNumber evidence="1">2.5.1.6</ecNumber>
    </recommendedName>
    <alternativeName>
        <fullName evidence="1">MAT</fullName>
    </alternativeName>
    <alternativeName>
        <fullName evidence="1">Methionine adenosyltransferase</fullName>
    </alternativeName>
</protein>
<evidence type="ECO:0000255" key="1">
    <source>
        <dbReference type="HAMAP-Rule" id="MF_00086"/>
    </source>
</evidence>
<name>METK_LISMH</name>